<sequence>MFKYTDRSVRQYIERQQRSAMLEQEQAEKDKKERRKAGLLFFGTIVVLVAVVAVYIVPQSLDAMWHENYEKPAQEAARN</sequence>
<feature type="chain" id="PRO_0000106162" description="Inhibitor of host cell division protein">
    <location>
        <begin position="1"/>
        <end position="79"/>
    </location>
</feature>
<feature type="transmembrane region" description="Helical" evidence="1">
    <location>
        <begin position="37"/>
        <end position="57"/>
    </location>
</feature>
<feature type="coiled-coil region" evidence="1">
    <location>
        <begin position="15"/>
        <end position="35"/>
    </location>
</feature>
<protein>
    <recommendedName>
        <fullName evidence="3">Inhibitor of host cell division protein</fullName>
    </recommendedName>
    <alternativeName>
        <fullName evidence="5">Gene 56 protein</fullName>
        <shortName evidence="5">Gp56</shortName>
    </alternativeName>
</protein>
<accession>O48410</accession>
<accession>B6V2W3</accession>
<reference evidence="4" key="1">
    <citation type="journal article" date="1998" name="Virology">
        <title>Genes and regulatory sites of the 'host-takeover module' in the terminal redundancy of Bacillus subtilis bacteriophage SPO1.</title>
        <authorList>
            <person name="Stewart C.R."/>
            <person name="Gaslightwala I."/>
            <person name="Hinata K."/>
            <person name="Krolikowski K.A."/>
            <person name="Needleman D.S."/>
            <person name="Peng A.S.-Y."/>
            <person name="Peterman M.A."/>
            <person name="Tobias A."/>
            <person name="Wei P."/>
        </authorList>
    </citation>
    <scope>NUCLEOTIDE SEQUENCE [GENOMIC DNA]</scope>
</reference>
<reference evidence="5" key="2">
    <citation type="journal article" date="2009" name="J. Mol. Biol.">
        <title>The genome of Bacillus subtilis bacteriophage SPO1.</title>
        <authorList>
            <person name="Stewart C.R."/>
            <person name="Casjens S.R."/>
            <person name="Cresawn S.G."/>
            <person name="Houtz J.M."/>
            <person name="Smith A.L."/>
            <person name="Ford M.E."/>
            <person name="Peebles C.L."/>
            <person name="Hatfull G.F."/>
            <person name="Hendrix R.W."/>
            <person name="Huang W.M."/>
            <person name="Pedulla M.L."/>
        </authorList>
    </citation>
    <scope>NUCLEOTIDE SEQUENCE [LARGE SCALE GENOMIC DNA]</scope>
</reference>
<reference key="3">
    <citation type="journal article" date="2013" name="Virology">
        <title>The product of SPO1 gene 56 inhibits host cell division during infection of Bacillus subtilis by bacteriophage SPO1.</title>
        <authorList>
            <person name="Stewart C.R."/>
            <person name="Deery W.J."/>
            <person name="Egan E.S."/>
            <person name="Myles B."/>
            <person name="Petti A.A."/>
        </authorList>
    </citation>
    <scope>FUNCTION</scope>
    <scope>DISRUPTION PHENOTYPE</scope>
</reference>
<comment type="function">
    <text evidence="2">Inhibits host cell division leading to filamentation (PubMed:24210121). Does not prevent host cell growth, DNA synthesis or chromosome segregation (PubMed:24210121). Does not seem to be essential for productive bacterial host infection (PubMed:24210121).</text>
</comment>
<comment type="subcellular location">
    <subcellularLocation>
        <location evidence="3">Host membrane</location>
        <topology evidence="1">Single-pass membrane protein</topology>
    </subcellularLocation>
</comment>
<comment type="disruption phenotype">
    <text evidence="2">Disrupts inhibition of host cell division (PubMed:24210121). Has no effect on host DNA synthesis, burst size or latent period during infection (PubMed:24210121).</text>
</comment>
<gene>
    <name evidence="5" type="primary">56</name>
    <name evidence="5" type="ORF">SPO1_26</name>
</gene>
<organismHost>
    <name type="scientific">Bacillus subtilis</name>
    <dbReference type="NCBI Taxonomy" id="1423"/>
</organismHost>
<proteinExistence type="inferred from homology"/>
<organism evidence="6">
    <name type="scientific">Bacillus phage SP01</name>
    <name type="common">Bacteriophage SP01</name>
    <dbReference type="NCBI Taxonomy" id="2884427"/>
    <lineage>
        <taxon>Viruses</taxon>
        <taxon>Duplodnaviria</taxon>
        <taxon>Heunggongvirae</taxon>
        <taxon>Uroviricota</taxon>
        <taxon>Caudoviricetes</taxon>
        <taxon>Herelleviridae</taxon>
        <taxon>Spounavirinae</taxon>
        <taxon>Okubovirus</taxon>
        <taxon>Okubovirus SPO1</taxon>
    </lineage>
</organism>
<dbReference type="EMBL" id="AF031901">
    <property type="protein sequence ID" value="AAC29025.1"/>
    <property type="molecule type" value="Genomic_DNA"/>
</dbReference>
<dbReference type="EMBL" id="FJ230960">
    <property type="protein sequence ID" value="ACI90931.1"/>
    <property type="molecule type" value="Genomic_DNA"/>
</dbReference>
<dbReference type="RefSeq" id="YP_002300302.1">
    <property type="nucleotide sequence ID" value="NC_011421.1"/>
</dbReference>
<dbReference type="SMR" id="O48410"/>
<dbReference type="GeneID" id="7009015"/>
<dbReference type="KEGG" id="vg:7009015"/>
<dbReference type="Proteomes" id="UP000001590">
    <property type="component" value="Genome"/>
</dbReference>
<dbReference type="GO" id="GO:0033644">
    <property type="term" value="C:host cell membrane"/>
    <property type="evidence" value="ECO:0007669"/>
    <property type="project" value="UniProtKB-SubCell"/>
</dbReference>
<dbReference type="GO" id="GO:0016020">
    <property type="term" value="C:membrane"/>
    <property type="evidence" value="ECO:0007669"/>
    <property type="project" value="UniProtKB-KW"/>
</dbReference>
<dbReference type="GO" id="GO:0042742">
    <property type="term" value="P:defense response to bacterium"/>
    <property type="evidence" value="ECO:0007669"/>
    <property type="project" value="UniProtKB-KW"/>
</dbReference>
<keyword id="KW-0044">Antibiotic</keyword>
<keyword id="KW-0929">Antimicrobial</keyword>
<keyword id="KW-0175">Coiled coil</keyword>
<keyword id="KW-1043">Host membrane</keyword>
<keyword id="KW-0472">Membrane</keyword>
<keyword id="KW-1185">Reference proteome</keyword>
<keyword id="KW-0812">Transmembrane</keyword>
<keyword id="KW-1133">Transmembrane helix</keyword>
<name>GP56_BPSP1</name>
<evidence type="ECO:0000255" key="1"/>
<evidence type="ECO:0000269" key="2">
    <source>
    </source>
</evidence>
<evidence type="ECO:0000305" key="3"/>
<evidence type="ECO:0000312" key="4">
    <source>
        <dbReference type="EMBL" id="AAC29025.1"/>
    </source>
</evidence>
<evidence type="ECO:0000312" key="5">
    <source>
        <dbReference type="EMBL" id="ACI90931.1"/>
    </source>
</evidence>
<evidence type="ECO:0000312" key="6">
    <source>
        <dbReference type="Proteomes" id="UP000001590"/>
    </source>
</evidence>